<evidence type="ECO:0000250" key="1"/>
<evidence type="ECO:0000305" key="2"/>
<protein>
    <recommendedName>
        <fullName>Probable Xaa-Pro aminopeptidase P</fullName>
        <shortName>AMPP</shortName>
        <shortName>Aminopeptidase P</shortName>
        <ecNumber>3.4.11.9</ecNumber>
    </recommendedName>
    <alternativeName>
        <fullName>Aminoacylproline aminopeptidase</fullName>
    </alternativeName>
    <alternativeName>
        <fullName>Prolidase</fullName>
    </alternativeName>
</protein>
<proteinExistence type="inferred from homology"/>
<dbReference type="EC" id="3.4.11.9"/>
<dbReference type="EMBL" id="ADNJ02000003">
    <property type="protein sequence ID" value="EFZ01049.1"/>
    <property type="molecule type" value="Genomic_DNA"/>
</dbReference>
<dbReference type="RefSeq" id="XP_007819834.1">
    <property type="nucleotide sequence ID" value="XM_007821643.1"/>
</dbReference>
<dbReference type="SMR" id="E9EUE6"/>
<dbReference type="GeneID" id="19257931"/>
<dbReference type="KEGG" id="maj:MAA_03645"/>
<dbReference type="HOGENOM" id="CLU_011781_2_3_1"/>
<dbReference type="OrthoDB" id="9995434at2759"/>
<dbReference type="Proteomes" id="UP000002498">
    <property type="component" value="Unassembled WGS sequence"/>
</dbReference>
<dbReference type="GO" id="GO:0005737">
    <property type="term" value="C:cytoplasm"/>
    <property type="evidence" value="ECO:0007669"/>
    <property type="project" value="UniProtKB-ARBA"/>
</dbReference>
<dbReference type="GO" id="GO:0046872">
    <property type="term" value="F:metal ion binding"/>
    <property type="evidence" value="ECO:0007669"/>
    <property type="project" value="UniProtKB-KW"/>
</dbReference>
<dbReference type="GO" id="GO:0070006">
    <property type="term" value="F:metalloaminopeptidase activity"/>
    <property type="evidence" value="ECO:0007669"/>
    <property type="project" value="InterPro"/>
</dbReference>
<dbReference type="GO" id="GO:0006508">
    <property type="term" value="P:proteolysis"/>
    <property type="evidence" value="ECO:0007669"/>
    <property type="project" value="UniProtKB-KW"/>
</dbReference>
<dbReference type="CDD" id="cd01085">
    <property type="entry name" value="APP"/>
    <property type="match status" value="1"/>
</dbReference>
<dbReference type="FunFam" id="3.40.350.10:FF:000010">
    <property type="entry name" value="Probable Xaa-Pro aminopeptidase P"/>
    <property type="match status" value="1"/>
</dbReference>
<dbReference type="FunFam" id="3.90.230.10:FF:000007">
    <property type="entry name" value="Xaa-Pro aminopeptidase P"/>
    <property type="match status" value="1"/>
</dbReference>
<dbReference type="FunFam" id="3.40.350.10:FF:000003">
    <property type="entry name" value="Xaa-pro aminopeptidase P"/>
    <property type="match status" value="1"/>
</dbReference>
<dbReference type="Gene3D" id="3.90.230.10">
    <property type="entry name" value="Creatinase/methionine aminopeptidase superfamily"/>
    <property type="match status" value="1"/>
</dbReference>
<dbReference type="Gene3D" id="3.40.350.10">
    <property type="entry name" value="Creatinase/prolidase N-terminal domain"/>
    <property type="match status" value="2"/>
</dbReference>
<dbReference type="InterPro" id="IPR029149">
    <property type="entry name" value="Creatin/AminoP/Spt16_N"/>
</dbReference>
<dbReference type="InterPro" id="IPR036005">
    <property type="entry name" value="Creatinase/aminopeptidase-like"/>
</dbReference>
<dbReference type="InterPro" id="IPR000587">
    <property type="entry name" value="Creatinase_N"/>
</dbReference>
<dbReference type="InterPro" id="IPR000994">
    <property type="entry name" value="Pept_M24"/>
</dbReference>
<dbReference type="InterPro" id="IPR033740">
    <property type="entry name" value="Pept_M24B"/>
</dbReference>
<dbReference type="InterPro" id="IPR032416">
    <property type="entry name" value="Peptidase_M24_C"/>
</dbReference>
<dbReference type="InterPro" id="IPR001131">
    <property type="entry name" value="Peptidase_M24B_aminopep-P_CS"/>
</dbReference>
<dbReference type="InterPro" id="IPR050422">
    <property type="entry name" value="X-Pro_aminopeptidase_P"/>
</dbReference>
<dbReference type="PANTHER" id="PTHR43763">
    <property type="entry name" value="XAA-PRO AMINOPEPTIDASE 1"/>
    <property type="match status" value="1"/>
</dbReference>
<dbReference type="PANTHER" id="PTHR43763:SF6">
    <property type="entry name" value="XAA-PRO AMINOPEPTIDASE 1"/>
    <property type="match status" value="1"/>
</dbReference>
<dbReference type="Pfam" id="PF01321">
    <property type="entry name" value="Creatinase_N"/>
    <property type="match status" value="1"/>
</dbReference>
<dbReference type="Pfam" id="PF16189">
    <property type="entry name" value="Creatinase_N_2"/>
    <property type="match status" value="1"/>
</dbReference>
<dbReference type="Pfam" id="PF00557">
    <property type="entry name" value="Peptidase_M24"/>
    <property type="match status" value="1"/>
</dbReference>
<dbReference type="Pfam" id="PF16188">
    <property type="entry name" value="Peptidase_M24_C"/>
    <property type="match status" value="1"/>
</dbReference>
<dbReference type="SUPFAM" id="SSF55920">
    <property type="entry name" value="Creatinase/aminopeptidase"/>
    <property type="match status" value="1"/>
</dbReference>
<dbReference type="SUPFAM" id="SSF53092">
    <property type="entry name" value="Creatinase/prolidase N-terminal domain"/>
    <property type="match status" value="1"/>
</dbReference>
<dbReference type="PROSITE" id="PS00491">
    <property type="entry name" value="PROLINE_PEPTIDASE"/>
    <property type="match status" value="1"/>
</dbReference>
<reference key="1">
    <citation type="journal article" date="2011" name="PLoS Genet.">
        <title>Genome sequencing and comparative transcriptomics of the model entomopathogenic fungi Metarhizium anisopliae and M. acridum.</title>
        <authorList>
            <person name="Gao Q."/>
            <person name="Jin K."/>
            <person name="Ying S.-H."/>
            <person name="Zhang Y."/>
            <person name="Xiao G."/>
            <person name="Shang Y."/>
            <person name="Duan Z."/>
            <person name="Hu X."/>
            <person name="Xie X.-Q."/>
            <person name="Zhou G."/>
            <person name="Peng G."/>
            <person name="Luo Z."/>
            <person name="Huang W."/>
            <person name="Wang B."/>
            <person name="Fang W."/>
            <person name="Wang S."/>
            <person name="Zhong Y."/>
            <person name="Ma L.-J."/>
            <person name="St Leger R.J."/>
            <person name="Zhao G.-P."/>
            <person name="Pei Y."/>
            <person name="Feng M.-G."/>
            <person name="Xia Y."/>
            <person name="Wang C."/>
        </authorList>
    </citation>
    <scope>NUCLEOTIDE SEQUENCE [LARGE SCALE GENOMIC DNA]</scope>
    <source>
        <strain>ARSEF 23 / ATCC MYA-3075</strain>
    </source>
</reference>
<reference key="2">
    <citation type="journal article" date="2014" name="Proc. Natl. Acad. Sci. U.S.A.">
        <title>Trajectory and genomic determinants of fungal-pathogen speciation and host adaptation.</title>
        <authorList>
            <person name="Hu X."/>
            <person name="Xiao G."/>
            <person name="Zheng P."/>
            <person name="Shang Y."/>
            <person name="Su Y."/>
            <person name="Zhang X."/>
            <person name="Liu X."/>
            <person name="Zhan S."/>
            <person name="St Leger R.J."/>
            <person name="Wang C."/>
        </authorList>
    </citation>
    <scope>GENOME REANNOTATION</scope>
    <source>
        <strain>ARSEF 23 / ATCC MYA-3075</strain>
    </source>
</reference>
<comment type="function">
    <text evidence="1">Catalyzes the removal of a penultimate prolyl residue from the N-termini of peptides.</text>
</comment>
<comment type="catalytic activity">
    <reaction>
        <text>Release of any N-terminal amino acid, including proline, that is linked to proline, even from a dipeptide or tripeptide.</text>
        <dbReference type="EC" id="3.4.11.9"/>
    </reaction>
</comment>
<comment type="cofactor">
    <cofactor evidence="1">
        <name>Mn(2+)</name>
        <dbReference type="ChEBI" id="CHEBI:29035"/>
    </cofactor>
    <text evidence="1">Binds 2 manganese ions per subunit.</text>
</comment>
<comment type="similarity">
    <text evidence="2">Belongs to the peptidase M24B family.</text>
</comment>
<gene>
    <name type="primary">AMPP</name>
    <name type="ORF">MAA_03645</name>
</gene>
<accession>E9EUE6</accession>
<keyword id="KW-0031">Aminopeptidase</keyword>
<keyword id="KW-0378">Hydrolase</keyword>
<keyword id="KW-0464">Manganese</keyword>
<keyword id="KW-0479">Metal-binding</keyword>
<keyword id="KW-0482">Metalloprotease</keyword>
<keyword id="KW-0645">Protease</keyword>
<feature type="chain" id="PRO_0000411796" description="Probable Xaa-Pro aminopeptidase P">
    <location>
        <begin position="1"/>
        <end position="618"/>
    </location>
</feature>
<feature type="binding site" evidence="1">
    <location>
        <position position="414"/>
    </location>
    <ligand>
        <name>Mn(2+)</name>
        <dbReference type="ChEBI" id="CHEBI:29035"/>
        <label>2</label>
    </ligand>
</feature>
<feature type="binding site" evidence="1">
    <location>
        <position position="425"/>
    </location>
    <ligand>
        <name>Mn(2+)</name>
        <dbReference type="ChEBI" id="CHEBI:29035"/>
        <label>1</label>
    </ligand>
</feature>
<feature type="binding site" evidence="1">
    <location>
        <position position="425"/>
    </location>
    <ligand>
        <name>Mn(2+)</name>
        <dbReference type="ChEBI" id="CHEBI:29035"/>
        <label>2</label>
    </ligand>
</feature>
<feature type="binding site" evidence="1">
    <location>
        <position position="523"/>
    </location>
    <ligand>
        <name>Mn(2+)</name>
        <dbReference type="ChEBI" id="CHEBI:29035"/>
        <label>1</label>
    </ligand>
</feature>
<feature type="binding site" evidence="1">
    <location>
        <position position="537"/>
    </location>
    <ligand>
        <name>Mn(2+)</name>
        <dbReference type="ChEBI" id="CHEBI:29035"/>
        <label>1</label>
    </ligand>
</feature>
<feature type="binding site" evidence="1">
    <location>
        <position position="537"/>
    </location>
    <ligand>
        <name>Mn(2+)</name>
        <dbReference type="ChEBI" id="CHEBI:29035"/>
        <label>2</label>
    </ligand>
</feature>
<sequence length="618" mass="67996">MADSSPQLAKLRSLMKERKVHVYVIPSEDSHSSEYIAACDARREFMSGFTGSAGCAIVTLEAAALATDGRYFNQAAKQLDGNWTLLKQGLQDVPTWQEWAASQSAGGKTVAVDPSLLPGSAAKKLNDQVRKAGGADLVPLDENIVDIAWGDSRPERPCQSVSVLPDELAGKPVTTKIEELRQELAKKNCPGFFVSMLDEVAWLFNLRGNDIPYNPVFFSYATITPETAILYVDESKLDESCRAHLRENNVQVKPYDSFFPDARQLHTEVKAKRQAGGDGVVVGNFLISNKASWAMSRALGGDGSVEEMRSPVGDAKAVKNETEMNGMRACHVRDGAALIEFFAWLEDQLADKKIMIDEVQAADKLEELRSKHQHFVGLSFPTISSTGANAAIIHYGPEKGSCATIDPGRVYLCDSGAQYRDGTTDTTRTLHFGKPSDAEKKAYTLVLKGLIGLDTAVFPKGTTGFALDCLARQHLWKNGLDYRHGTGHGVGSYLNVHEGPIGIGTRVQYTEVPLAPGNVLSNEPGYYEDGNFGIRIENIMMVREVQTEHCFGDKSYLGFEHVTMVPYCQSLIERDMLTADEKAWLNAYNDEVLKNTKGFFQGDDLTMAWLTRETRPIE</sequence>
<name>AMPP1_METRA</name>
<organism>
    <name type="scientific">Metarhizium robertsii (strain ARSEF 23 / ATCC MYA-3075)</name>
    <name type="common">Metarhizium anisopliae (strain ARSEF 23)</name>
    <dbReference type="NCBI Taxonomy" id="655844"/>
    <lineage>
        <taxon>Eukaryota</taxon>
        <taxon>Fungi</taxon>
        <taxon>Dikarya</taxon>
        <taxon>Ascomycota</taxon>
        <taxon>Pezizomycotina</taxon>
        <taxon>Sordariomycetes</taxon>
        <taxon>Hypocreomycetidae</taxon>
        <taxon>Hypocreales</taxon>
        <taxon>Clavicipitaceae</taxon>
        <taxon>Metarhizium</taxon>
    </lineage>
</organism>